<feature type="chain" id="PRO_1000149045" description="Phosphoribosyl-ATP pyrophosphatase">
    <location>
        <begin position="1"/>
        <end position="107"/>
    </location>
</feature>
<dbReference type="EC" id="3.6.1.31" evidence="1"/>
<dbReference type="EMBL" id="CP001407">
    <property type="protein sequence ID" value="ACO29250.1"/>
    <property type="molecule type" value="Genomic_DNA"/>
</dbReference>
<dbReference type="SMR" id="C1EMQ9"/>
<dbReference type="KEGG" id="bcx:BCA_1467"/>
<dbReference type="PATRIC" id="fig|572264.18.peg.1417"/>
<dbReference type="UniPathway" id="UPA00031">
    <property type="reaction ID" value="UER00007"/>
</dbReference>
<dbReference type="Proteomes" id="UP000002210">
    <property type="component" value="Chromosome"/>
</dbReference>
<dbReference type="GO" id="GO:0005737">
    <property type="term" value="C:cytoplasm"/>
    <property type="evidence" value="ECO:0007669"/>
    <property type="project" value="UniProtKB-SubCell"/>
</dbReference>
<dbReference type="GO" id="GO:0005524">
    <property type="term" value="F:ATP binding"/>
    <property type="evidence" value="ECO:0007669"/>
    <property type="project" value="UniProtKB-KW"/>
</dbReference>
<dbReference type="GO" id="GO:0004636">
    <property type="term" value="F:phosphoribosyl-ATP diphosphatase activity"/>
    <property type="evidence" value="ECO:0007669"/>
    <property type="project" value="UniProtKB-UniRule"/>
</dbReference>
<dbReference type="GO" id="GO:0000105">
    <property type="term" value="P:L-histidine biosynthetic process"/>
    <property type="evidence" value="ECO:0007669"/>
    <property type="project" value="UniProtKB-UniRule"/>
</dbReference>
<dbReference type="CDD" id="cd11534">
    <property type="entry name" value="NTP-PPase_HisIE_like"/>
    <property type="match status" value="1"/>
</dbReference>
<dbReference type="Gene3D" id="1.10.287.1080">
    <property type="entry name" value="MazG-like"/>
    <property type="match status" value="1"/>
</dbReference>
<dbReference type="HAMAP" id="MF_01020">
    <property type="entry name" value="HisE"/>
    <property type="match status" value="1"/>
</dbReference>
<dbReference type="InterPro" id="IPR008179">
    <property type="entry name" value="HisE"/>
</dbReference>
<dbReference type="InterPro" id="IPR021130">
    <property type="entry name" value="PRib-ATP_PPHydrolase-like"/>
</dbReference>
<dbReference type="NCBIfam" id="TIGR03188">
    <property type="entry name" value="histidine_hisI"/>
    <property type="match status" value="1"/>
</dbReference>
<dbReference type="PANTHER" id="PTHR42945">
    <property type="entry name" value="HISTIDINE BIOSYNTHESIS BIFUNCTIONAL PROTEIN"/>
    <property type="match status" value="1"/>
</dbReference>
<dbReference type="PANTHER" id="PTHR42945:SF9">
    <property type="entry name" value="HISTIDINE BIOSYNTHESIS BIFUNCTIONAL PROTEIN HISIE"/>
    <property type="match status" value="1"/>
</dbReference>
<dbReference type="Pfam" id="PF01503">
    <property type="entry name" value="PRA-PH"/>
    <property type="match status" value="1"/>
</dbReference>
<dbReference type="SUPFAM" id="SSF101386">
    <property type="entry name" value="all-alpha NTP pyrophosphatases"/>
    <property type="match status" value="1"/>
</dbReference>
<reference key="1">
    <citation type="submission" date="2009-02" db="EMBL/GenBank/DDBJ databases">
        <title>Genome sequence of Bacillus cereus 03BB102.</title>
        <authorList>
            <person name="Dodson R.J."/>
            <person name="Jackson P."/>
            <person name="Munk A.C."/>
            <person name="Brettin T."/>
            <person name="Bruce D."/>
            <person name="Detter C."/>
            <person name="Tapia R."/>
            <person name="Han C."/>
            <person name="Sutton G."/>
            <person name="Sims D."/>
        </authorList>
    </citation>
    <scope>NUCLEOTIDE SEQUENCE [LARGE SCALE GENOMIC DNA]</scope>
    <source>
        <strain>03BB102</strain>
    </source>
</reference>
<sequence>MENTFKLLFETIGERKRNPLPESYTNYLFSKGEDKILKKIGEECTEVIIASKNNDKEELVKEMVDVLYHCFVLLAEKNISLEDIMAEVTERNGKLSRVGDRREIDTL</sequence>
<accession>C1EMQ9</accession>
<keyword id="KW-0028">Amino-acid biosynthesis</keyword>
<keyword id="KW-0067">ATP-binding</keyword>
<keyword id="KW-0963">Cytoplasm</keyword>
<keyword id="KW-0368">Histidine biosynthesis</keyword>
<keyword id="KW-0378">Hydrolase</keyword>
<keyword id="KW-0547">Nucleotide-binding</keyword>
<name>HIS2_BACC3</name>
<gene>
    <name evidence="1" type="primary">hisE</name>
    <name type="ordered locus">BCA_1467</name>
</gene>
<comment type="catalytic activity">
    <reaction evidence="1">
        <text>1-(5-phospho-beta-D-ribosyl)-ATP + H2O = 1-(5-phospho-beta-D-ribosyl)-5'-AMP + diphosphate + H(+)</text>
        <dbReference type="Rhea" id="RHEA:22828"/>
        <dbReference type="ChEBI" id="CHEBI:15377"/>
        <dbReference type="ChEBI" id="CHEBI:15378"/>
        <dbReference type="ChEBI" id="CHEBI:33019"/>
        <dbReference type="ChEBI" id="CHEBI:59457"/>
        <dbReference type="ChEBI" id="CHEBI:73183"/>
        <dbReference type="EC" id="3.6.1.31"/>
    </reaction>
</comment>
<comment type="pathway">
    <text evidence="1">Amino-acid biosynthesis; L-histidine biosynthesis; L-histidine from 5-phospho-alpha-D-ribose 1-diphosphate: step 2/9.</text>
</comment>
<comment type="subcellular location">
    <subcellularLocation>
        <location evidence="1">Cytoplasm</location>
    </subcellularLocation>
</comment>
<comment type="similarity">
    <text evidence="1">Belongs to the PRA-PH family.</text>
</comment>
<proteinExistence type="inferred from homology"/>
<organism>
    <name type="scientific">Bacillus cereus (strain 03BB102)</name>
    <dbReference type="NCBI Taxonomy" id="572264"/>
    <lineage>
        <taxon>Bacteria</taxon>
        <taxon>Bacillati</taxon>
        <taxon>Bacillota</taxon>
        <taxon>Bacilli</taxon>
        <taxon>Bacillales</taxon>
        <taxon>Bacillaceae</taxon>
        <taxon>Bacillus</taxon>
        <taxon>Bacillus cereus group</taxon>
    </lineage>
</organism>
<protein>
    <recommendedName>
        <fullName evidence="1">Phosphoribosyl-ATP pyrophosphatase</fullName>
        <shortName evidence="1">PRA-PH</shortName>
        <ecNumber evidence="1">3.6.1.31</ecNumber>
    </recommendedName>
</protein>
<evidence type="ECO:0000255" key="1">
    <source>
        <dbReference type="HAMAP-Rule" id="MF_01020"/>
    </source>
</evidence>